<accession>Q8EFN8</accession>
<keyword id="KW-0067">ATP-binding</keyword>
<keyword id="KW-0436">Ligase</keyword>
<keyword id="KW-0460">Magnesium</keyword>
<keyword id="KW-0479">Metal-binding</keyword>
<keyword id="KW-0547">Nucleotide-binding</keyword>
<keyword id="KW-1185">Reference proteome</keyword>
<keyword id="KW-0816">Tricarboxylic acid cycle</keyword>
<reference key="1">
    <citation type="journal article" date="2002" name="Nat. Biotechnol.">
        <title>Genome sequence of the dissimilatory metal ion-reducing bacterium Shewanella oneidensis.</title>
        <authorList>
            <person name="Heidelberg J.F."/>
            <person name="Paulsen I.T."/>
            <person name="Nelson K.E."/>
            <person name="Gaidos E.J."/>
            <person name="Nelson W.C."/>
            <person name="Read T.D."/>
            <person name="Eisen J.A."/>
            <person name="Seshadri R."/>
            <person name="Ward N.L."/>
            <person name="Methe B.A."/>
            <person name="Clayton R.A."/>
            <person name="Meyer T."/>
            <person name="Tsapin A."/>
            <person name="Scott J."/>
            <person name="Beanan M.J."/>
            <person name="Brinkac L.M."/>
            <person name="Daugherty S.C."/>
            <person name="DeBoy R.T."/>
            <person name="Dodson R.J."/>
            <person name="Durkin A.S."/>
            <person name="Haft D.H."/>
            <person name="Kolonay J.F."/>
            <person name="Madupu R."/>
            <person name="Peterson J.D."/>
            <person name="Umayam L.A."/>
            <person name="White O."/>
            <person name="Wolf A.M."/>
            <person name="Vamathevan J.J."/>
            <person name="Weidman J.F."/>
            <person name="Impraim M."/>
            <person name="Lee K."/>
            <person name="Berry K.J."/>
            <person name="Lee C."/>
            <person name="Mueller J."/>
            <person name="Khouri H.M."/>
            <person name="Gill J."/>
            <person name="Utterback T.R."/>
            <person name="McDonald L.A."/>
            <person name="Feldblyum T.V."/>
            <person name="Smith H.O."/>
            <person name="Venter J.C."/>
            <person name="Nealson K.H."/>
            <person name="Fraser C.M."/>
        </authorList>
    </citation>
    <scope>NUCLEOTIDE SEQUENCE [LARGE SCALE GENOMIC DNA]</scope>
    <source>
        <strain>ATCC 700550 / JCM 31522 / CIP 106686 / LMG 19005 / NCIMB 14063 / MR-1</strain>
    </source>
</reference>
<proteinExistence type="inferred from homology"/>
<feature type="chain" id="PRO_0000102857" description="Succinate--CoA ligase [ADP-forming] subunit beta">
    <location>
        <begin position="1"/>
        <end position="388"/>
    </location>
</feature>
<feature type="domain" description="ATP-grasp" evidence="1">
    <location>
        <begin position="9"/>
        <end position="244"/>
    </location>
</feature>
<feature type="binding site" evidence="1">
    <location>
        <position position="46"/>
    </location>
    <ligand>
        <name>ATP</name>
        <dbReference type="ChEBI" id="CHEBI:30616"/>
    </ligand>
</feature>
<feature type="binding site" evidence="1">
    <location>
        <begin position="53"/>
        <end position="55"/>
    </location>
    <ligand>
        <name>ATP</name>
        <dbReference type="ChEBI" id="CHEBI:30616"/>
    </ligand>
</feature>
<feature type="binding site" evidence="1">
    <location>
        <position position="99"/>
    </location>
    <ligand>
        <name>ATP</name>
        <dbReference type="ChEBI" id="CHEBI:30616"/>
    </ligand>
</feature>
<feature type="binding site" evidence="1">
    <location>
        <position position="102"/>
    </location>
    <ligand>
        <name>ATP</name>
        <dbReference type="ChEBI" id="CHEBI:30616"/>
    </ligand>
</feature>
<feature type="binding site" evidence="1">
    <location>
        <position position="107"/>
    </location>
    <ligand>
        <name>ATP</name>
        <dbReference type="ChEBI" id="CHEBI:30616"/>
    </ligand>
</feature>
<feature type="binding site" evidence="1">
    <location>
        <position position="199"/>
    </location>
    <ligand>
        <name>Mg(2+)</name>
        <dbReference type="ChEBI" id="CHEBI:18420"/>
    </ligand>
</feature>
<feature type="binding site" evidence="1">
    <location>
        <position position="213"/>
    </location>
    <ligand>
        <name>Mg(2+)</name>
        <dbReference type="ChEBI" id="CHEBI:18420"/>
    </ligand>
</feature>
<feature type="binding site" evidence="1">
    <location>
        <position position="264"/>
    </location>
    <ligand>
        <name>substrate</name>
        <note>ligand shared with subunit alpha</note>
    </ligand>
</feature>
<feature type="binding site" evidence="1">
    <location>
        <begin position="321"/>
        <end position="323"/>
    </location>
    <ligand>
        <name>substrate</name>
        <note>ligand shared with subunit alpha</note>
    </ligand>
</feature>
<organism>
    <name type="scientific">Shewanella oneidensis (strain ATCC 700550 / JCM 31522 / CIP 106686 / LMG 19005 / NCIMB 14063 / MR-1)</name>
    <dbReference type="NCBI Taxonomy" id="211586"/>
    <lineage>
        <taxon>Bacteria</taxon>
        <taxon>Pseudomonadati</taxon>
        <taxon>Pseudomonadota</taxon>
        <taxon>Gammaproteobacteria</taxon>
        <taxon>Alteromonadales</taxon>
        <taxon>Shewanellaceae</taxon>
        <taxon>Shewanella</taxon>
    </lineage>
</organism>
<comment type="function">
    <text evidence="1">Succinyl-CoA synthetase functions in the citric acid cycle (TCA), coupling the hydrolysis of succinyl-CoA to the synthesis of either ATP or GTP and thus represents the only step of substrate-level phosphorylation in the TCA. The beta subunit provides nucleotide specificity of the enzyme and binds the substrate succinate, while the binding sites for coenzyme A and phosphate are found in the alpha subunit.</text>
</comment>
<comment type="catalytic activity">
    <reaction evidence="1">
        <text>succinate + ATP + CoA = succinyl-CoA + ADP + phosphate</text>
        <dbReference type="Rhea" id="RHEA:17661"/>
        <dbReference type="ChEBI" id="CHEBI:30031"/>
        <dbReference type="ChEBI" id="CHEBI:30616"/>
        <dbReference type="ChEBI" id="CHEBI:43474"/>
        <dbReference type="ChEBI" id="CHEBI:57287"/>
        <dbReference type="ChEBI" id="CHEBI:57292"/>
        <dbReference type="ChEBI" id="CHEBI:456216"/>
        <dbReference type="EC" id="6.2.1.5"/>
    </reaction>
    <physiologicalReaction direction="right-to-left" evidence="1">
        <dbReference type="Rhea" id="RHEA:17663"/>
    </physiologicalReaction>
</comment>
<comment type="catalytic activity">
    <reaction evidence="1">
        <text>GTP + succinate + CoA = succinyl-CoA + GDP + phosphate</text>
        <dbReference type="Rhea" id="RHEA:22120"/>
        <dbReference type="ChEBI" id="CHEBI:30031"/>
        <dbReference type="ChEBI" id="CHEBI:37565"/>
        <dbReference type="ChEBI" id="CHEBI:43474"/>
        <dbReference type="ChEBI" id="CHEBI:57287"/>
        <dbReference type="ChEBI" id="CHEBI:57292"/>
        <dbReference type="ChEBI" id="CHEBI:58189"/>
    </reaction>
    <physiologicalReaction direction="right-to-left" evidence="1">
        <dbReference type="Rhea" id="RHEA:22122"/>
    </physiologicalReaction>
</comment>
<comment type="cofactor">
    <cofactor evidence="1">
        <name>Mg(2+)</name>
        <dbReference type="ChEBI" id="CHEBI:18420"/>
    </cofactor>
    <text evidence="1">Binds 1 Mg(2+) ion per subunit.</text>
</comment>
<comment type="pathway">
    <text evidence="1">Carbohydrate metabolism; tricarboxylic acid cycle; succinate from succinyl-CoA (ligase route): step 1/1.</text>
</comment>
<comment type="subunit">
    <text evidence="1">Heterotetramer of two alpha and two beta subunits.</text>
</comment>
<comment type="similarity">
    <text evidence="1">Belongs to the succinate/malate CoA ligase beta subunit family.</text>
</comment>
<dbReference type="EC" id="6.2.1.5" evidence="1"/>
<dbReference type="EMBL" id="AE014299">
    <property type="protein sequence ID" value="AAN54983.1"/>
    <property type="molecule type" value="Genomic_DNA"/>
</dbReference>
<dbReference type="RefSeq" id="NP_717539.1">
    <property type="nucleotide sequence ID" value="NC_004347.2"/>
</dbReference>
<dbReference type="RefSeq" id="WP_011072032.1">
    <property type="nucleotide sequence ID" value="NC_004347.2"/>
</dbReference>
<dbReference type="SMR" id="Q8EFN8"/>
<dbReference type="STRING" id="211586.SO_1932"/>
<dbReference type="PaxDb" id="211586-SO_1932"/>
<dbReference type="KEGG" id="son:SO_1932"/>
<dbReference type="PATRIC" id="fig|211586.12.peg.1857"/>
<dbReference type="eggNOG" id="COG0045">
    <property type="taxonomic scope" value="Bacteria"/>
</dbReference>
<dbReference type="HOGENOM" id="CLU_037430_0_2_6"/>
<dbReference type="OrthoDB" id="9802602at2"/>
<dbReference type="PhylomeDB" id="Q8EFN8"/>
<dbReference type="BioCyc" id="SONE211586:G1GMP-1782-MONOMER"/>
<dbReference type="UniPathway" id="UPA00223">
    <property type="reaction ID" value="UER00999"/>
</dbReference>
<dbReference type="Proteomes" id="UP000008186">
    <property type="component" value="Chromosome"/>
</dbReference>
<dbReference type="GO" id="GO:0005829">
    <property type="term" value="C:cytosol"/>
    <property type="evidence" value="ECO:0000318"/>
    <property type="project" value="GO_Central"/>
</dbReference>
<dbReference type="GO" id="GO:0042709">
    <property type="term" value="C:succinate-CoA ligase complex"/>
    <property type="evidence" value="ECO:0000318"/>
    <property type="project" value="GO_Central"/>
</dbReference>
<dbReference type="GO" id="GO:0005524">
    <property type="term" value="F:ATP binding"/>
    <property type="evidence" value="ECO:0007669"/>
    <property type="project" value="UniProtKB-UniRule"/>
</dbReference>
<dbReference type="GO" id="GO:0000287">
    <property type="term" value="F:magnesium ion binding"/>
    <property type="evidence" value="ECO:0007669"/>
    <property type="project" value="UniProtKB-UniRule"/>
</dbReference>
<dbReference type="GO" id="GO:0004775">
    <property type="term" value="F:succinate-CoA ligase (ADP-forming) activity"/>
    <property type="evidence" value="ECO:0000318"/>
    <property type="project" value="GO_Central"/>
</dbReference>
<dbReference type="GO" id="GO:0004776">
    <property type="term" value="F:succinate-CoA ligase (GDP-forming) activity"/>
    <property type="evidence" value="ECO:0007669"/>
    <property type="project" value="RHEA"/>
</dbReference>
<dbReference type="GO" id="GO:0006104">
    <property type="term" value="P:succinyl-CoA metabolic process"/>
    <property type="evidence" value="ECO:0000318"/>
    <property type="project" value="GO_Central"/>
</dbReference>
<dbReference type="GO" id="GO:0006099">
    <property type="term" value="P:tricarboxylic acid cycle"/>
    <property type="evidence" value="ECO:0000318"/>
    <property type="project" value="GO_Central"/>
</dbReference>
<dbReference type="FunFam" id="3.30.1490.20:FF:000002">
    <property type="entry name" value="Succinate--CoA ligase [ADP-forming] subunit beta"/>
    <property type="match status" value="1"/>
</dbReference>
<dbReference type="FunFam" id="3.30.470.20:FF:000002">
    <property type="entry name" value="Succinate--CoA ligase [ADP-forming] subunit beta"/>
    <property type="match status" value="1"/>
</dbReference>
<dbReference type="FunFam" id="3.40.50.261:FF:000001">
    <property type="entry name" value="Succinate--CoA ligase [ADP-forming] subunit beta"/>
    <property type="match status" value="1"/>
</dbReference>
<dbReference type="Gene3D" id="3.30.1490.20">
    <property type="entry name" value="ATP-grasp fold, A domain"/>
    <property type="match status" value="1"/>
</dbReference>
<dbReference type="Gene3D" id="3.30.470.20">
    <property type="entry name" value="ATP-grasp fold, B domain"/>
    <property type="match status" value="1"/>
</dbReference>
<dbReference type="Gene3D" id="3.40.50.261">
    <property type="entry name" value="Succinyl-CoA synthetase domains"/>
    <property type="match status" value="1"/>
</dbReference>
<dbReference type="HAMAP" id="MF_00558">
    <property type="entry name" value="Succ_CoA_beta"/>
    <property type="match status" value="1"/>
</dbReference>
<dbReference type="InterPro" id="IPR011761">
    <property type="entry name" value="ATP-grasp"/>
</dbReference>
<dbReference type="InterPro" id="IPR013650">
    <property type="entry name" value="ATP-grasp_succ-CoA_synth-type"/>
</dbReference>
<dbReference type="InterPro" id="IPR013815">
    <property type="entry name" value="ATP_grasp_subdomain_1"/>
</dbReference>
<dbReference type="InterPro" id="IPR017866">
    <property type="entry name" value="Succ-CoA_synthase_bsu_CS"/>
</dbReference>
<dbReference type="InterPro" id="IPR005811">
    <property type="entry name" value="SUCC_ACL_C"/>
</dbReference>
<dbReference type="InterPro" id="IPR005809">
    <property type="entry name" value="Succ_CoA_ligase-like_bsu"/>
</dbReference>
<dbReference type="InterPro" id="IPR016102">
    <property type="entry name" value="Succinyl-CoA_synth-like"/>
</dbReference>
<dbReference type="NCBIfam" id="NF001913">
    <property type="entry name" value="PRK00696.1"/>
    <property type="match status" value="1"/>
</dbReference>
<dbReference type="NCBIfam" id="TIGR01016">
    <property type="entry name" value="sucCoAbeta"/>
    <property type="match status" value="1"/>
</dbReference>
<dbReference type="PANTHER" id="PTHR11815:SF10">
    <property type="entry name" value="SUCCINATE--COA LIGASE [GDP-FORMING] SUBUNIT BETA, MITOCHONDRIAL"/>
    <property type="match status" value="1"/>
</dbReference>
<dbReference type="PANTHER" id="PTHR11815">
    <property type="entry name" value="SUCCINYL-COA SYNTHETASE BETA CHAIN"/>
    <property type="match status" value="1"/>
</dbReference>
<dbReference type="Pfam" id="PF08442">
    <property type="entry name" value="ATP-grasp_2"/>
    <property type="match status" value="1"/>
</dbReference>
<dbReference type="Pfam" id="PF00549">
    <property type="entry name" value="Ligase_CoA"/>
    <property type="match status" value="1"/>
</dbReference>
<dbReference type="PIRSF" id="PIRSF001554">
    <property type="entry name" value="SucCS_beta"/>
    <property type="match status" value="1"/>
</dbReference>
<dbReference type="SUPFAM" id="SSF56059">
    <property type="entry name" value="Glutathione synthetase ATP-binding domain-like"/>
    <property type="match status" value="1"/>
</dbReference>
<dbReference type="SUPFAM" id="SSF52210">
    <property type="entry name" value="Succinyl-CoA synthetase domains"/>
    <property type="match status" value="1"/>
</dbReference>
<dbReference type="PROSITE" id="PS50975">
    <property type="entry name" value="ATP_GRASP"/>
    <property type="match status" value="1"/>
</dbReference>
<dbReference type="PROSITE" id="PS01217">
    <property type="entry name" value="SUCCINYL_COA_LIG_3"/>
    <property type="match status" value="1"/>
</dbReference>
<evidence type="ECO:0000255" key="1">
    <source>
        <dbReference type="HAMAP-Rule" id="MF_00558"/>
    </source>
</evidence>
<gene>
    <name evidence="1" type="primary">sucC</name>
    <name type="ordered locus">SO_1932</name>
</gene>
<name>SUCC_SHEON</name>
<sequence>MNLHEYQAKSLFAEYGLPVSEGFACDTAQEAVEAAGRIGGNLWVVKCQVHAGGRGKAGGVKVTGDKEEIRAFAEYWLGKNLVTYQTDEKGQPVAKILVESCTDIANELYLGAVVDRATRRVVFMASTEGGVEIEKVAEETPELIHKAIIDPLTGPQPFQARDLGFKLGLNPTQMKQFTKIFMGLATMFVDHDFALLEINPLVITTEGNLHCLDGKIGIDGNALFRQPKIKAMHDPSQDDAREAHAAMFELNYVALDGNVGCMVNGAGLAMGTMDIVNLHGGKPANFLDVGGGATKERVAEAFKIILSDSNVKAVLVNIFGGIVRCDMIAEGIIGAVKEVGVKVPVVVRLEGTNAELGREVLAKSGLDIIAANSLTDAAELVVKAAEGK</sequence>
<protein>
    <recommendedName>
        <fullName evidence="1">Succinate--CoA ligase [ADP-forming] subunit beta</fullName>
        <ecNumber evidence="1">6.2.1.5</ecNumber>
    </recommendedName>
    <alternativeName>
        <fullName evidence="1">Succinyl-CoA synthetase subunit beta</fullName>
        <shortName evidence="1">SCS-beta</shortName>
    </alternativeName>
</protein>